<comment type="function">
    <text evidence="3">Co-chaperone required for the assembly of iron-sulfur (Fe/S) clusters in mitochondria (PubMed:26545917). Stimulates the ATPase activity of the mitochondrial Hsp70 chaperone ssc1, to mediate the transfer of iron-sulfur clusters from isu1 to grx5 (PubMed:26545917).</text>
</comment>
<comment type="subunit">
    <text evidence="3">Interacts with ssc1.</text>
</comment>
<comment type="subcellular location">
    <subcellularLocation>
        <location evidence="2">Mitochondrion matrix</location>
    </subcellularLocation>
</comment>
<comment type="disruption phenotype">
    <text evidence="3">Inviable.</text>
</comment>
<comment type="similarity">
    <text evidence="5">Belongs to the HscB family.</text>
</comment>
<feature type="transit peptide" description="Mitochondrion" evidence="1">
    <location>
        <begin position="1"/>
        <end position="49"/>
    </location>
</feature>
<feature type="chain" id="PRO_0000363388" description="J-type co-chaperone jac1, mitochondrial">
    <location>
        <begin position="50"/>
        <end position="225"/>
    </location>
</feature>
<feature type="domain" description="J">
    <location>
        <begin position="61"/>
        <end position="137"/>
    </location>
</feature>
<feature type="short sequence motif" description="HSP70 binding" evidence="3">
    <location>
        <begin position="98"/>
        <end position="100"/>
    </location>
</feature>
<feature type="mutagenesis site" description="Inviable. Abolishes jac1 ATPase activator activity." evidence="3">
    <original>H</original>
    <variation>A</variation>
    <location>
        <position position="98"/>
    </location>
</feature>
<feature type="mutagenesis site" description="Inviable. Abolishes jac1 ATPase activator activity." evidence="3">
    <original>P</original>
    <variation>A</variation>
    <location>
        <position position="99"/>
    </location>
</feature>
<feature type="mutagenesis site" description="Inviable. Abolishes jac1 ATPase activator activity." evidence="3">
    <original>D</original>
    <variation>A</variation>
    <location>
        <position position="100"/>
    </location>
</feature>
<reference key="1">
    <citation type="journal article" date="2002" name="Nature">
        <title>The genome sequence of Schizosaccharomyces pombe.</title>
        <authorList>
            <person name="Wood V."/>
            <person name="Gwilliam R."/>
            <person name="Rajandream M.A."/>
            <person name="Lyne M.H."/>
            <person name="Lyne R."/>
            <person name="Stewart A."/>
            <person name="Sgouros J.G."/>
            <person name="Peat N."/>
            <person name="Hayles J."/>
            <person name="Baker S.G."/>
            <person name="Basham D."/>
            <person name="Bowman S."/>
            <person name="Brooks K."/>
            <person name="Brown D."/>
            <person name="Brown S."/>
            <person name="Chillingworth T."/>
            <person name="Churcher C.M."/>
            <person name="Collins M."/>
            <person name="Connor R."/>
            <person name="Cronin A."/>
            <person name="Davis P."/>
            <person name="Feltwell T."/>
            <person name="Fraser A."/>
            <person name="Gentles S."/>
            <person name="Goble A."/>
            <person name="Hamlin N."/>
            <person name="Harris D.E."/>
            <person name="Hidalgo J."/>
            <person name="Hodgson G."/>
            <person name="Holroyd S."/>
            <person name="Hornsby T."/>
            <person name="Howarth S."/>
            <person name="Huckle E.J."/>
            <person name="Hunt S."/>
            <person name="Jagels K."/>
            <person name="James K.D."/>
            <person name="Jones L."/>
            <person name="Jones M."/>
            <person name="Leather S."/>
            <person name="McDonald S."/>
            <person name="McLean J."/>
            <person name="Mooney P."/>
            <person name="Moule S."/>
            <person name="Mungall K.L."/>
            <person name="Murphy L.D."/>
            <person name="Niblett D."/>
            <person name="Odell C."/>
            <person name="Oliver K."/>
            <person name="O'Neil S."/>
            <person name="Pearson D."/>
            <person name="Quail M.A."/>
            <person name="Rabbinowitsch E."/>
            <person name="Rutherford K.M."/>
            <person name="Rutter S."/>
            <person name="Saunders D."/>
            <person name="Seeger K."/>
            <person name="Sharp S."/>
            <person name="Skelton J."/>
            <person name="Simmonds M.N."/>
            <person name="Squares R."/>
            <person name="Squares S."/>
            <person name="Stevens K."/>
            <person name="Taylor K."/>
            <person name="Taylor R.G."/>
            <person name="Tivey A."/>
            <person name="Walsh S.V."/>
            <person name="Warren T."/>
            <person name="Whitehead S."/>
            <person name="Woodward J.R."/>
            <person name="Volckaert G."/>
            <person name="Aert R."/>
            <person name="Robben J."/>
            <person name="Grymonprez B."/>
            <person name="Weltjens I."/>
            <person name="Vanstreels E."/>
            <person name="Rieger M."/>
            <person name="Schaefer M."/>
            <person name="Mueller-Auer S."/>
            <person name="Gabel C."/>
            <person name="Fuchs M."/>
            <person name="Duesterhoeft A."/>
            <person name="Fritzc C."/>
            <person name="Holzer E."/>
            <person name="Moestl D."/>
            <person name="Hilbert H."/>
            <person name="Borzym K."/>
            <person name="Langer I."/>
            <person name="Beck A."/>
            <person name="Lehrach H."/>
            <person name="Reinhardt R."/>
            <person name="Pohl T.M."/>
            <person name="Eger P."/>
            <person name="Zimmermann W."/>
            <person name="Wedler H."/>
            <person name="Wambutt R."/>
            <person name="Purnelle B."/>
            <person name="Goffeau A."/>
            <person name="Cadieu E."/>
            <person name="Dreano S."/>
            <person name="Gloux S."/>
            <person name="Lelaure V."/>
            <person name="Mottier S."/>
            <person name="Galibert F."/>
            <person name="Aves S.J."/>
            <person name="Xiang Z."/>
            <person name="Hunt C."/>
            <person name="Moore K."/>
            <person name="Hurst S.M."/>
            <person name="Lucas M."/>
            <person name="Rochet M."/>
            <person name="Gaillardin C."/>
            <person name="Tallada V.A."/>
            <person name="Garzon A."/>
            <person name="Thode G."/>
            <person name="Daga R.R."/>
            <person name="Cruzado L."/>
            <person name="Jimenez J."/>
            <person name="Sanchez M."/>
            <person name="del Rey F."/>
            <person name="Benito J."/>
            <person name="Dominguez A."/>
            <person name="Revuelta J.L."/>
            <person name="Moreno S."/>
            <person name="Armstrong J."/>
            <person name="Forsburg S.L."/>
            <person name="Cerutti L."/>
            <person name="Lowe T."/>
            <person name="McCombie W.R."/>
            <person name="Paulsen I."/>
            <person name="Potashkin J."/>
            <person name="Shpakovski G.V."/>
            <person name="Ussery D."/>
            <person name="Barrell B.G."/>
            <person name="Nurse P."/>
        </authorList>
    </citation>
    <scope>NUCLEOTIDE SEQUENCE [LARGE SCALE GENOMIC DNA]</scope>
    <source>
        <strain>972 / ATCC 24843</strain>
    </source>
</reference>
<reference key="2">
    <citation type="journal article" date="2006" name="Nat. Biotechnol.">
        <title>ORFeome cloning and global analysis of protein localization in the fission yeast Schizosaccharomyces pombe.</title>
        <authorList>
            <person name="Matsuyama A."/>
            <person name="Arai R."/>
            <person name="Yashiroda Y."/>
            <person name="Shirai A."/>
            <person name="Kamata A."/>
            <person name="Sekido S."/>
            <person name="Kobayashi Y."/>
            <person name="Hashimoto A."/>
            <person name="Hamamoto M."/>
            <person name="Hiraoka Y."/>
            <person name="Horinouchi S."/>
            <person name="Yoshida M."/>
        </authorList>
    </citation>
    <scope>SUBCELLULAR LOCATION [LARGE SCALE ANALYSIS]</scope>
</reference>
<reference key="3">
    <citation type="journal article" date="2016" name="Mol. Biol. Evol.">
        <title>Iron-Sulfur Cluster Biogenesis Chaperones: Evidence for Emergence of Mutational Robustness of a Highly Specific Protein-Protein Interaction.</title>
        <authorList>
            <person name="Delewski W."/>
            <person name="Paterkiewicz B."/>
            <person name="Manicki M."/>
            <person name="Schilke B."/>
            <person name="Tomiczek B."/>
            <person name="Ciesielski S.J."/>
            <person name="Nierzwicki L."/>
            <person name="Czub J."/>
            <person name="Dutkiewicz R."/>
            <person name="Craig E.A."/>
            <person name="Marszalek J."/>
        </authorList>
    </citation>
    <scope>FUNCTION</scope>
    <scope>INTERACTION WITH SSC1</scope>
    <scope>DISRUPTION PHENOTYPE</scope>
    <scope>MUTAGENESIS OF HIS-98; PRO-99 AND ASP-100</scope>
</reference>
<accession>Q9UTL6</accession>
<proteinExistence type="evidence at protein level"/>
<organism>
    <name type="scientific">Schizosaccharomyces pombe (strain 972 / ATCC 24843)</name>
    <name type="common">Fission yeast</name>
    <dbReference type="NCBI Taxonomy" id="284812"/>
    <lineage>
        <taxon>Eukaryota</taxon>
        <taxon>Fungi</taxon>
        <taxon>Dikarya</taxon>
        <taxon>Ascomycota</taxon>
        <taxon>Taphrinomycotina</taxon>
        <taxon>Schizosaccharomycetes</taxon>
        <taxon>Schizosaccharomycetales</taxon>
        <taxon>Schizosaccharomycetaceae</taxon>
        <taxon>Schizosaccharomyces</taxon>
    </lineage>
</organism>
<sequence length="225" mass="25901">MLKQAGNQSFRPFISFAQKSLFNRQITGNHWIFARFKFYPLNKIVNYNHFHSSSCQSEAKNFYKQFEGDISDPPPKGPFDIDLGALKSSYLRKMKTLHPDVAQGKDAALAQRDSAELSKAYNTLKAPLTRAEYILQLQGINPVSEDISNSDPEFLMEIMDVHENISASRDSPEKLLQLSQENQGRKVQEINEIRKAMESSNWDSALLYVNRLRYWNTIDKILHDL</sequence>
<keyword id="KW-0143">Chaperone</keyword>
<keyword id="KW-0496">Mitochondrion</keyword>
<keyword id="KW-1185">Reference proteome</keyword>
<keyword id="KW-0809">Transit peptide</keyword>
<dbReference type="EMBL" id="CU329670">
    <property type="protein sequence ID" value="CAB59688.1"/>
    <property type="molecule type" value="Genomic_DNA"/>
</dbReference>
<dbReference type="PIR" id="T37675">
    <property type="entry name" value="T37675"/>
</dbReference>
<dbReference type="RefSeq" id="NP_594669.1">
    <property type="nucleotide sequence ID" value="NM_001020098.2"/>
</dbReference>
<dbReference type="SMR" id="Q9UTL6"/>
<dbReference type="FunCoup" id="Q9UTL6">
    <property type="interactions" value="298"/>
</dbReference>
<dbReference type="STRING" id="284812.Q9UTL6"/>
<dbReference type="PaxDb" id="4896-SPAC144.08.1"/>
<dbReference type="EnsemblFungi" id="SPAC144.08.1">
    <property type="protein sequence ID" value="SPAC144.08.1:pep"/>
    <property type="gene ID" value="SPAC144.08"/>
</dbReference>
<dbReference type="PomBase" id="SPAC144.08">
    <property type="gene designation" value="jac1"/>
</dbReference>
<dbReference type="VEuPathDB" id="FungiDB:SPAC144.08"/>
<dbReference type="eggNOG" id="KOG3192">
    <property type="taxonomic scope" value="Eukaryota"/>
</dbReference>
<dbReference type="HOGENOM" id="CLU_068529_1_1_1"/>
<dbReference type="InParanoid" id="Q9UTL6"/>
<dbReference type="OMA" id="AMESSNW"/>
<dbReference type="PhylomeDB" id="Q9UTL6"/>
<dbReference type="Reactome" id="R-SPO-1268020">
    <property type="pathway name" value="Mitochondrial protein import"/>
</dbReference>
<dbReference type="Reactome" id="R-SPO-1362409">
    <property type="pathway name" value="Mitochondrial iron-sulfur cluster biogenesis"/>
</dbReference>
<dbReference type="Reactome" id="R-SPO-9865881">
    <property type="pathway name" value="Complex III assembly"/>
</dbReference>
<dbReference type="PRO" id="PR:Q9UTL6"/>
<dbReference type="Proteomes" id="UP000002485">
    <property type="component" value="Chromosome I"/>
</dbReference>
<dbReference type="GO" id="GO:0005759">
    <property type="term" value="C:mitochondrial matrix"/>
    <property type="evidence" value="ECO:0007669"/>
    <property type="project" value="UniProtKB-SubCell"/>
</dbReference>
<dbReference type="GO" id="GO:0005739">
    <property type="term" value="C:mitochondrion"/>
    <property type="evidence" value="ECO:0007005"/>
    <property type="project" value="PomBase"/>
</dbReference>
<dbReference type="GO" id="GO:0001671">
    <property type="term" value="F:ATPase activator activity"/>
    <property type="evidence" value="ECO:0000314"/>
    <property type="project" value="PomBase"/>
</dbReference>
<dbReference type="GO" id="GO:0030544">
    <property type="term" value="F:Hsp70 protein binding"/>
    <property type="evidence" value="ECO:0000255"/>
    <property type="project" value="PomBase"/>
</dbReference>
<dbReference type="GO" id="GO:0044571">
    <property type="term" value="P:[2Fe-2S] cluster assembly"/>
    <property type="evidence" value="ECO:0000269"/>
    <property type="project" value="PomBase"/>
</dbReference>
<dbReference type="GO" id="GO:0051259">
    <property type="term" value="P:protein complex oligomerization"/>
    <property type="evidence" value="ECO:0007669"/>
    <property type="project" value="InterPro"/>
</dbReference>
<dbReference type="Gene3D" id="1.10.287.110">
    <property type="entry name" value="DnaJ domain"/>
    <property type="match status" value="1"/>
</dbReference>
<dbReference type="Gene3D" id="1.20.1280.20">
    <property type="entry name" value="HscB, C-terminal domain"/>
    <property type="match status" value="1"/>
</dbReference>
<dbReference type="InterPro" id="IPR004640">
    <property type="entry name" value="HscB"/>
</dbReference>
<dbReference type="InterPro" id="IPR036386">
    <property type="entry name" value="HscB_C_sf"/>
</dbReference>
<dbReference type="InterPro" id="IPR009073">
    <property type="entry name" value="HscB_oligo_C"/>
</dbReference>
<dbReference type="InterPro" id="IPR036869">
    <property type="entry name" value="J_dom_sf"/>
</dbReference>
<dbReference type="NCBIfam" id="TIGR00714">
    <property type="entry name" value="hscB"/>
    <property type="match status" value="1"/>
</dbReference>
<dbReference type="PANTHER" id="PTHR14021">
    <property type="entry name" value="IRON-SULFUR CLUSTER CO-CHAPERONE PROTEIN HSCB"/>
    <property type="match status" value="1"/>
</dbReference>
<dbReference type="PANTHER" id="PTHR14021:SF15">
    <property type="entry name" value="IRON-SULFUR CLUSTER CO-CHAPERONE PROTEIN HSCB"/>
    <property type="match status" value="1"/>
</dbReference>
<dbReference type="Pfam" id="PF07743">
    <property type="entry name" value="HSCB_C"/>
    <property type="match status" value="1"/>
</dbReference>
<dbReference type="SUPFAM" id="SSF46565">
    <property type="entry name" value="Chaperone J-domain"/>
    <property type="match status" value="1"/>
</dbReference>
<dbReference type="SUPFAM" id="SSF47144">
    <property type="entry name" value="HSC20 (HSCB), C-terminal oligomerisation domain"/>
    <property type="match status" value="1"/>
</dbReference>
<protein>
    <recommendedName>
        <fullName evidence="4">J-type co-chaperone jac1, mitochondrial</fullName>
    </recommendedName>
    <alternativeName>
        <fullName evidence="5">J-type accessory chaperone 1</fullName>
    </alternativeName>
</protein>
<gene>
    <name evidence="4" type="primary">jac1</name>
    <name type="ORF">SPAC144.08</name>
</gene>
<name>JAC1_SCHPO</name>
<evidence type="ECO:0000255" key="1"/>
<evidence type="ECO:0000269" key="2">
    <source>
    </source>
</evidence>
<evidence type="ECO:0000269" key="3">
    <source>
    </source>
</evidence>
<evidence type="ECO:0000303" key="4">
    <source>
    </source>
</evidence>
<evidence type="ECO:0000305" key="5"/>